<dbReference type="EMBL" id="AY794221">
    <property type="protein sequence ID" value="AAV68328.1"/>
    <property type="molecule type" value="mRNA"/>
</dbReference>
<dbReference type="SMR" id="Q5Q113"/>
<dbReference type="ArachnoServer" id="AS000630">
    <property type="toxin name" value="U1-theraphotoxin-Lsp1c"/>
</dbReference>
<dbReference type="GO" id="GO:0005576">
    <property type="term" value="C:extracellular region"/>
    <property type="evidence" value="ECO:0007669"/>
    <property type="project" value="UniProtKB-SubCell"/>
</dbReference>
<dbReference type="GO" id="GO:0090729">
    <property type="term" value="F:toxin activity"/>
    <property type="evidence" value="ECO:0007669"/>
    <property type="project" value="UniProtKB-KW"/>
</dbReference>
<dbReference type="InterPro" id="IPR012625">
    <property type="entry name" value="Hwtx-2-like"/>
</dbReference>
<dbReference type="Pfam" id="PF08089">
    <property type="entry name" value="Toxin_20"/>
    <property type="match status" value="1"/>
</dbReference>
<dbReference type="SUPFAM" id="SSF57059">
    <property type="entry name" value="omega toxin-like"/>
    <property type="match status" value="1"/>
</dbReference>
<dbReference type="PROSITE" id="PS60022">
    <property type="entry name" value="HWTX_2"/>
    <property type="match status" value="1"/>
</dbReference>
<proteinExistence type="inferred from homology"/>
<reference key="1">
    <citation type="journal article" date="2004" name="Toxicon">
        <title>Molecular cloning of toxins expressed by the venom gland of Lasiodora sp.</title>
        <authorList>
            <person name="Vieira A.L.G."/>
            <person name="Moura M.B."/>
            <person name="Baba E.H."/>
            <person name="Chavez-Olortegui C."/>
            <person name="Kalapothakis E."/>
            <person name="Castro I.M."/>
        </authorList>
    </citation>
    <scope>NUCLEOTIDE SEQUENCE [MRNA]</scope>
    <source>
        <tissue>Venom gland</tissue>
    </source>
</reference>
<name>TXLT3_LASSB</name>
<organism>
    <name type="scientific">Lasiodora sp. (strain IBSP 8539)</name>
    <name type="common">Brazilian salmon pink birdeater</name>
    <name type="synonym">Brazilian salmon pink tarantula</name>
    <dbReference type="NCBI Taxonomy" id="300858"/>
    <lineage>
        <taxon>Eukaryota</taxon>
        <taxon>Metazoa</taxon>
        <taxon>Ecdysozoa</taxon>
        <taxon>Arthropoda</taxon>
        <taxon>Chelicerata</taxon>
        <taxon>Arachnida</taxon>
        <taxon>Araneae</taxon>
        <taxon>Mygalomorphae</taxon>
        <taxon>Theraphosidae</taxon>
        <taxon>Lasiodora</taxon>
    </lineage>
</organism>
<evidence type="ECO:0000250" key="1"/>
<evidence type="ECO:0000250" key="2">
    <source>
        <dbReference type="UniProtKB" id="P0DRD8"/>
    </source>
</evidence>
<evidence type="ECO:0000255" key="3"/>
<evidence type="ECO:0000303" key="4">
    <source>
    </source>
</evidence>
<evidence type="ECO:0000305" key="5"/>
<evidence type="ECO:0000305" key="6">
    <source>
    </source>
</evidence>
<feature type="signal peptide" evidence="3">
    <location>
        <begin position="1"/>
        <end position="23"/>
    </location>
</feature>
<feature type="propeptide" id="PRO_0000287394" evidence="1">
    <location>
        <begin position="24"/>
        <end position="50"/>
    </location>
</feature>
<feature type="chain" id="PRO_0000287395" description="U1-theraphotoxin-Lsp1c">
    <location>
        <begin position="51"/>
        <end position="99"/>
    </location>
</feature>
<feature type="disulfide bond" evidence="1">
    <location>
        <begin position="54"/>
        <end position="67"/>
    </location>
</feature>
<feature type="disulfide bond" evidence="1">
    <location>
        <begin position="58"/>
        <end position="91"/>
    </location>
</feature>
<feature type="disulfide bond" evidence="5">
    <location>
        <begin position="72"/>
        <end position="74"/>
    </location>
</feature>
<feature type="disulfide bond" evidence="1">
    <location>
        <begin position="85"/>
        <end position="96"/>
    </location>
</feature>
<accession>Q5Q113</accession>
<protein>
    <recommendedName>
        <fullName evidence="5">U1-theraphotoxin-Lsp1c</fullName>
        <shortName evidence="5">U1-TRTX-Lsp1c</shortName>
    </recommendedName>
    <alternativeName>
        <fullName evidence="4">LTx3</fullName>
    </alternativeName>
</protein>
<keyword id="KW-1015">Disulfide bond</keyword>
<keyword id="KW-0964">Secreted</keyword>
<keyword id="KW-0732">Signal</keyword>
<keyword id="KW-0800">Toxin</keyword>
<comment type="function">
    <text evidence="2">Toxin that causes irreversible contractile paralysis into adult Aedes aegypti resulting in 100% mortality after 24 hours.</text>
</comment>
<comment type="subcellular location">
    <subcellularLocation>
        <location evidence="6">Secreted</location>
    </subcellularLocation>
</comment>
<comment type="tissue specificity">
    <text evidence="6">Expressed by the venom gland.</text>
</comment>
<comment type="similarity">
    <text evidence="5">Belongs to the neurotoxin 12 (Hwtx-2) family. 04 (lasiotoxin) subfamily.</text>
</comment>
<sequence>MRKITIRALLLCSLLLVFHTSAAAELQAQEGHLMIPGDTDTALETVDDERFFECTFECDIKKEGKPCKPKGCKCDDKDNKDHKKCSGGWRCKLKLCLKF</sequence>